<name>TP8L2_BOVIN</name>
<gene>
    <name type="primary">TNFAIP8L2</name>
</gene>
<accession>Q3ZBK5</accession>
<keyword id="KW-0963">Cytoplasm</keyword>
<keyword id="KW-0391">Immunity</keyword>
<keyword id="KW-0399">Innate immunity</keyword>
<keyword id="KW-0458">Lysosome</keyword>
<keyword id="KW-0539">Nucleus</keyword>
<keyword id="KW-0597">Phosphoprotein</keyword>
<keyword id="KW-1185">Reference proteome</keyword>
<keyword id="KW-0832">Ubl conjugation</keyword>
<comment type="function">
    <text evidence="2 3">Acts as a negative regulator of innate and adaptive immunity by maintaining immune homeostasis. Plays a regulatory role in the Toll-like signaling pathway by determining the strength of LPS-induced signaling and gene expression (By similarity). Inhibits TCR-mediated T-cell activation and negatively regulate T-cell function to prevent hyperresponsiveness (By similarity). Also inhibits autolysosome formation via negatively modulating MTOR activation by interacting with RAC1 and promoting the disassociation of the RAC1-MTOR complex (By similarity). Plays an essential role in NK-cell biology by acting as a checkpoint and displaying an expression pattern correlating with NK-cell maturation process and by negatively regulating NK-cell maturation and antitumor immunity (By similarity). Mechanistically, suppresses IL-15-triggered mTOR activity in NK-cells (By similarity).</text>
</comment>
<comment type="subunit">
    <text evidence="2">May interact with CASP8; however, such result is unclear since could not reproduce the interaction with CASP8. Interacts with RAC1.</text>
</comment>
<comment type="subcellular location">
    <subcellularLocation>
        <location evidence="2">Cytoplasm</location>
    </subcellularLocation>
    <subcellularLocation>
        <location evidence="2">Nucleus</location>
    </subcellularLocation>
    <subcellularLocation>
        <location evidence="2">Lysosome</location>
    </subcellularLocation>
</comment>
<comment type="domain">
    <text evidence="1">The central region was initially thought to constitute a DED (death effector) domain. However, 3D-structure data reveal a previously uncharacterized fold that is different from the predicted fold of a DED (death effector) domain. It consists of a large, hydrophobic central cavity that is poised for cofactor binding (By similarity).</text>
</comment>
<comment type="PTM">
    <text evidence="2">Phosphorylated by TAK1/MAP3K7; this phosphorylation triggers association with BTRC and subsequent ubiquitination and degradation.</text>
</comment>
<comment type="PTM">
    <text evidence="2">Ubiquitinated in a BTRC-depdent manner; leading to degradation mediated through the proteasome pathway.</text>
</comment>
<comment type="similarity">
    <text evidence="4">Belongs to the TNFAIP8 family. TNFAIP8L2 subfamily.</text>
</comment>
<reference key="1">
    <citation type="submission" date="2005-08" db="EMBL/GenBank/DDBJ databases">
        <authorList>
            <consortium name="NIH - Mammalian Gene Collection (MGC) project"/>
        </authorList>
    </citation>
    <scope>NUCLEOTIDE SEQUENCE [LARGE SCALE MRNA]</scope>
    <source>
        <strain>Hereford</strain>
        <tissue>Thymus</tissue>
    </source>
</reference>
<feature type="chain" id="PRO_0000285770" description="Tumor necrosis factor alpha-induced protein 8-like protein 2">
    <location>
        <begin position="1"/>
        <end position="184"/>
    </location>
</feature>
<feature type="modified residue" description="Phosphoserine" evidence="2">
    <location>
        <position position="3"/>
    </location>
</feature>
<protein>
    <recommendedName>
        <fullName>Tumor necrosis factor alpha-induced protein 8-like protein 2</fullName>
        <shortName>TIPE2</shortName>
        <shortName>TNF alpha-induced protein 8-like protein 2</shortName>
        <shortName>TNFAIP8-like protein 2</shortName>
    </recommendedName>
</protein>
<evidence type="ECO:0000250" key="1"/>
<evidence type="ECO:0000250" key="2">
    <source>
        <dbReference type="UniProtKB" id="Q6P589"/>
    </source>
</evidence>
<evidence type="ECO:0000250" key="3">
    <source>
        <dbReference type="UniProtKB" id="Q9D8Y7"/>
    </source>
</evidence>
<evidence type="ECO:0000305" key="4"/>
<dbReference type="EMBL" id="BC103244">
    <property type="protein sequence ID" value="AAI03245.1"/>
    <property type="molecule type" value="mRNA"/>
</dbReference>
<dbReference type="RefSeq" id="NP_001029561.1">
    <property type="nucleotide sequence ID" value="NM_001034389.1"/>
</dbReference>
<dbReference type="SMR" id="Q3ZBK5"/>
<dbReference type="FunCoup" id="Q3ZBK5">
    <property type="interactions" value="413"/>
</dbReference>
<dbReference type="STRING" id="9913.ENSBTAP00000027182"/>
<dbReference type="PaxDb" id="9913-ENSBTAP00000027182"/>
<dbReference type="Ensembl" id="ENSBTAT00000027182.6">
    <property type="protein sequence ID" value="ENSBTAP00000027182.4"/>
    <property type="gene ID" value="ENSBTAG00000020394.6"/>
</dbReference>
<dbReference type="Ensembl" id="ENSBTAT00000113493.1">
    <property type="protein sequence ID" value="ENSBTAP00000092336.1"/>
    <property type="gene ID" value="ENSBTAG00000020394.6"/>
</dbReference>
<dbReference type="GeneID" id="510652"/>
<dbReference type="KEGG" id="bta:510652"/>
<dbReference type="CTD" id="79626"/>
<dbReference type="VEuPathDB" id="HostDB:ENSBTAG00000020394"/>
<dbReference type="VGNC" id="VGNC:36159">
    <property type="gene designation" value="TNFAIP8L2"/>
</dbReference>
<dbReference type="eggNOG" id="ENOG502QST4">
    <property type="taxonomic scope" value="Eukaryota"/>
</dbReference>
<dbReference type="GeneTree" id="ENSGT00390000003488"/>
<dbReference type="HOGENOM" id="CLU_085918_1_0_1"/>
<dbReference type="InParanoid" id="Q3ZBK5"/>
<dbReference type="OMA" id="IRRVFDH"/>
<dbReference type="OrthoDB" id="10055976at2759"/>
<dbReference type="TreeFam" id="TF323415"/>
<dbReference type="Reactome" id="R-BTA-1483255">
    <property type="pathway name" value="PI Metabolism"/>
</dbReference>
<dbReference type="Proteomes" id="UP000009136">
    <property type="component" value="Chromosome 3"/>
</dbReference>
<dbReference type="Bgee" id="ENSBTAG00000020394">
    <property type="expression patterns" value="Expressed in blood and 94 other cell types or tissues"/>
</dbReference>
<dbReference type="GO" id="GO:0005737">
    <property type="term" value="C:cytoplasm"/>
    <property type="evidence" value="ECO:0000318"/>
    <property type="project" value="GO_Central"/>
</dbReference>
<dbReference type="GO" id="GO:0005764">
    <property type="term" value="C:lysosome"/>
    <property type="evidence" value="ECO:0007669"/>
    <property type="project" value="UniProtKB-SubCell"/>
</dbReference>
<dbReference type="GO" id="GO:0005634">
    <property type="term" value="C:nucleus"/>
    <property type="evidence" value="ECO:0007669"/>
    <property type="project" value="UniProtKB-SubCell"/>
</dbReference>
<dbReference type="GO" id="GO:0045087">
    <property type="term" value="P:innate immune response"/>
    <property type="evidence" value="ECO:0007669"/>
    <property type="project" value="UniProtKB-KW"/>
</dbReference>
<dbReference type="GO" id="GO:0050728">
    <property type="term" value="P:negative regulation of inflammatory response"/>
    <property type="evidence" value="ECO:0000318"/>
    <property type="project" value="GO_Central"/>
</dbReference>
<dbReference type="GO" id="GO:0050868">
    <property type="term" value="P:negative regulation of T cell activation"/>
    <property type="evidence" value="ECO:0000318"/>
    <property type="project" value="GO_Central"/>
</dbReference>
<dbReference type="GO" id="GO:0042981">
    <property type="term" value="P:regulation of apoptotic process"/>
    <property type="evidence" value="ECO:0007669"/>
    <property type="project" value="InterPro"/>
</dbReference>
<dbReference type="GO" id="GO:0042110">
    <property type="term" value="P:T cell activation"/>
    <property type="evidence" value="ECO:0007669"/>
    <property type="project" value="Ensembl"/>
</dbReference>
<dbReference type="FunFam" id="1.20.1440.160:FF:000001">
    <property type="entry name" value="Tumor necrosis factor alpha-induced protein 8-like 1"/>
    <property type="match status" value="1"/>
</dbReference>
<dbReference type="Gene3D" id="1.20.1440.160">
    <property type="entry name" value="Tumor necrosis factor alpha-induced protein 8-like"/>
    <property type="match status" value="1"/>
</dbReference>
<dbReference type="InterPro" id="IPR008477">
    <property type="entry name" value="TNFAIP8-like"/>
</dbReference>
<dbReference type="InterPro" id="IPR038355">
    <property type="entry name" value="TNFAIP8_sf"/>
</dbReference>
<dbReference type="PANTHER" id="PTHR12757:SF4">
    <property type="entry name" value="TUMOR NECROSIS FACTOR ALPHA-INDUCED PROTEIN 8-LIKE PROTEIN 2"/>
    <property type="match status" value="1"/>
</dbReference>
<dbReference type="PANTHER" id="PTHR12757">
    <property type="entry name" value="TUMOR NECROSIS FACTOR INDUCED PROTEIN"/>
    <property type="match status" value="1"/>
</dbReference>
<dbReference type="Pfam" id="PF05527">
    <property type="entry name" value="DUF758"/>
    <property type="match status" value="1"/>
</dbReference>
<sequence length="184" mass="20574">MESFSSKSLVLQAEKKLLSKMAGRSVAHLFADETSSEVLDELYRVSKEYTRSRPQAQRVIKDLIKVAVKVAVLHRSGCFNPSELALATRFRQKLRQGAMTALSFGEVDFTFEAAVLASLLTECRDVLLELVERHLTPKSHGRIRHVFDHFSDAGLLTALYGPDYTQHLGKICGGLRKLLDEGKL</sequence>
<organism>
    <name type="scientific">Bos taurus</name>
    <name type="common">Bovine</name>
    <dbReference type="NCBI Taxonomy" id="9913"/>
    <lineage>
        <taxon>Eukaryota</taxon>
        <taxon>Metazoa</taxon>
        <taxon>Chordata</taxon>
        <taxon>Craniata</taxon>
        <taxon>Vertebrata</taxon>
        <taxon>Euteleostomi</taxon>
        <taxon>Mammalia</taxon>
        <taxon>Eutheria</taxon>
        <taxon>Laurasiatheria</taxon>
        <taxon>Artiodactyla</taxon>
        <taxon>Ruminantia</taxon>
        <taxon>Pecora</taxon>
        <taxon>Bovidae</taxon>
        <taxon>Bovinae</taxon>
        <taxon>Bos</taxon>
    </lineage>
</organism>
<proteinExistence type="evidence at transcript level"/>